<proteinExistence type="inferred from homology"/>
<keyword id="KW-0119">Carbohydrate metabolism</keyword>
<keyword id="KW-0210">Decarboxylase</keyword>
<keyword id="KW-0456">Lyase</keyword>
<keyword id="KW-0460">Magnesium</keyword>
<keyword id="KW-0479">Metal-binding</keyword>
<feature type="chain" id="PRO_0000236091" description="3-keto-L-gulonate-6-phosphate decarboxylase UlaD">
    <location>
        <begin position="1"/>
        <end position="216"/>
    </location>
</feature>
<feature type="binding site" evidence="1">
    <location>
        <position position="11"/>
    </location>
    <ligand>
        <name>substrate</name>
    </ligand>
</feature>
<feature type="binding site" evidence="1">
    <location>
        <position position="33"/>
    </location>
    <ligand>
        <name>Mg(2+)</name>
        <dbReference type="ChEBI" id="CHEBI:18420"/>
    </ligand>
</feature>
<feature type="binding site" evidence="1">
    <location>
        <position position="62"/>
    </location>
    <ligand>
        <name>Mg(2+)</name>
        <dbReference type="ChEBI" id="CHEBI:18420"/>
    </ligand>
</feature>
<feature type="binding site" evidence="1">
    <location>
        <position position="192"/>
    </location>
    <ligand>
        <name>substrate</name>
    </ligand>
</feature>
<feature type="site" description="Transition state stabilizer" evidence="1">
    <location>
        <position position="64"/>
    </location>
</feature>
<feature type="site" description="Transition state stabilizer" evidence="1">
    <location>
        <position position="67"/>
    </location>
</feature>
<organism>
    <name type="scientific">Salmonella choleraesuis (strain SC-B67)</name>
    <dbReference type="NCBI Taxonomy" id="321314"/>
    <lineage>
        <taxon>Bacteria</taxon>
        <taxon>Pseudomonadati</taxon>
        <taxon>Pseudomonadota</taxon>
        <taxon>Gammaproteobacteria</taxon>
        <taxon>Enterobacterales</taxon>
        <taxon>Enterobacteriaceae</taxon>
        <taxon>Salmonella</taxon>
    </lineage>
</organism>
<sequence>MSLPMLQVALDNQTMDSAYETTRLIAEEVDIIEVGTILCVGEGVRAVRDLKALYPHKIVLADAKIADAGKILSRMCFEANADWVTVICCADINTAKGALDVAKEFNGDVQIELTGYWTWEQAQQWRDAGIQQVVYHRSRDAQAAGVAWGEADITAIKRLSDMGFKVTVTGGLALEDLPLFKGIPIHVFIAGRSIRDAESPVEAARQFKRSIAQLWG</sequence>
<dbReference type="EC" id="4.1.1.85" evidence="1"/>
<dbReference type="EMBL" id="AE017220">
    <property type="protein sequence ID" value="AAX68166.1"/>
    <property type="status" value="ALT_INIT"/>
    <property type="molecule type" value="Genomic_DNA"/>
</dbReference>
<dbReference type="RefSeq" id="WP_000056761.1">
    <property type="nucleotide sequence ID" value="NC_006905.1"/>
</dbReference>
<dbReference type="SMR" id="Q57GJ6"/>
<dbReference type="KEGG" id="sec:SCH_4260"/>
<dbReference type="HOGENOM" id="CLU_081825_0_0_6"/>
<dbReference type="UniPathway" id="UPA00263">
    <property type="reaction ID" value="UER00378"/>
</dbReference>
<dbReference type="Proteomes" id="UP000000538">
    <property type="component" value="Chromosome"/>
</dbReference>
<dbReference type="GO" id="GO:0033982">
    <property type="term" value="F:3-dehydro-L-gulonate-6-phosphate decarboxylase activity"/>
    <property type="evidence" value="ECO:0007669"/>
    <property type="project" value="UniProtKB-EC"/>
</dbReference>
<dbReference type="GO" id="GO:0000287">
    <property type="term" value="F:magnesium ion binding"/>
    <property type="evidence" value="ECO:0007669"/>
    <property type="project" value="UniProtKB-UniRule"/>
</dbReference>
<dbReference type="GO" id="GO:0004590">
    <property type="term" value="F:orotidine-5'-phosphate decarboxylase activity"/>
    <property type="evidence" value="ECO:0007669"/>
    <property type="project" value="InterPro"/>
</dbReference>
<dbReference type="GO" id="GO:0006207">
    <property type="term" value="P:'de novo' pyrimidine nucleobase biosynthetic process"/>
    <property type="evidence" value="ECO:0007669"/>
    <property type="project" value="InterPro"/>
</dbReference>
<dbReference type="GO" id="GO:0019854">
    <property type="term" value="P:L-ascorbic acid catabolic process"/>
    <property type="evidence" value="ECO:0007669"/>
    <property type="project" value="UniProtKB-UniRule"/>
</dbReference>
<dbReference type="CDD" id="cd04726">
    <property type="entry name" value="KGPDC_HPS"/>
    <property type="match status" value="1"/>
</dbReference>
<dbReference type="FunFam" id="3.20.20.70:FF:000022">
    <property type="entry name" value="3-keto-L-gulonate-6-phosphate decarboxylase UlaD"/>
    <property type="match status" value="1"/>
</dbReference>
<dbReference type="Gene3D" id="3.20.20.70">
    <property type="entry name" value="Aldolase class I"/>
    <property type="match status" value="1"/>
</dbReference>
<dbReference type="HAMAP" id="MF_01267">
    <property type="entry name" value="UlaD"/>
    <property type="match status" value="1"/>
</dbReference>
<dbReference type="InterPro" id="IPR023942">
    <property type="entry name" value="3-keto-L-gulonate6Pdecase_UlaD"/>
</dbReference>
<dbReference type="InterPro" id="IPR013785">
    <property type="entry name" value="Aldolase_TIM"/>
</dbReference>
<dbReference type="InterPro" id="IPR041710">
    <property type="entry name" value="HPS/KGPDC"/>
</dbReference>
<dbReference type="InterPro" id="IPR001754">
    <property type="entry name" value="OMPdeCOase_dom"/>
</dbReference>
<dbReference type="InterPro" id="IPR011060">
    <property type="entry name" value="RibuloseP-bd_barrel"/>
</dbReference>
<dbReference type="NCBIfam" id="NF009832">
    <property type="entry name" value="PRK13306.1"/>
    <property type="match status" value="1"/>
</dbReference>
<dbReference type="PANTHER" id="PTHR35039">
    <property type="entry name" value="3-KETO-L-GULONATE-6-PHOSPHATE DECARBOXYLASE SGBH-RELATED"/>
    <property type="match status" value="1"/>
</dbReference>
<dbReference type="PANTHER" id="PTHR35039:SF3">
    <property type="entry name" value="3-KETO-L-GULONATE-6-PHOSPHATE DECARBOXYLASE SGBH-RELATED"/>
    <property type="match status" value="1"/>
</dbReference>
<dbReference type="Pfam" id="PF00215">
    <property type="entry name" value="OMPdecase"/>
    <property type="match status" value="1"/>
</dbReference>
<dbReference type="SMART" id="SM00934">
    <property type="entry name" value="OMPdecase"/>
    <property type="match status" value="1"/>
</dbReference>
<dbReference type="SUPFAM" id="SSF51366">
    <property type="entry name" value="Ribulose-phoshate binding barrel"/>
    <property type="match status" value="1"/>
</dbReference>
<protein>
    <recommendedName>
        <fullName evidence="1">3-keto-L-gulonate-6-phosphate decarboxylase UlaD</fullName>
        <ecNumber evidence="1">4.1.1.85</ecNumber>
    </recommendedName>
    <alternativeName>
        <fullName evidence="1">3-dehydro-L-gulonate-6-phosphate decarboxylase</fullName>
    </alternativeName>
    <alternativeName>
        <fullName evidence="1">KGPDC</fullName>
    </alternativeName>
    <alternativeName>
        <fullName evidence="1">L-ascorbate utilization protein D</fullName>
    </alternativeName>
</protein>
<reference key="1">
    <citation type="journal article" date="2005" name="Nucleic Acids Res.">
        <title>The genome sequence of Salmonella enterica serovar Choleraesuis, a highly invasive and resistant zoonotic pathogen.</title>
        <authorList>
            <person name="Chiu C.-H."/>
            <person name="Tang P."/>
            <person name="Chu C."/>
            <person name="Hu S."/>
            <person name="Bao Q."/>
            <person name="Yu J."/>
            <person name="Chou Y.-Y."/>
            <person name="Wang H.-S."/>
            <person name="Lee Y.-S."/>
        </authorList>
    </citation>
    <scope>NUCLEOTIDE SEQUENCE [LARGE SCALE GENOMIC DNA]</scope>
    <source>
        <strain>SC-B67</strain>
    </source>
</reference>
<gene>
    <name evidence="1" type="primary">ulaD</name>
    <name type="ordered locus">SCH_4260</name>
</gene>
<name>ULAD_SALCH</name>
<accession>Q57GJ6</accession>
<evidence type="ECO:0000255" key="1">
    <source>
        <dbReference type="HAMAP-Rule" id="MF_01267"/>
    </source>
</evidence>
<evidence type="ECO:0000305" key="2"/>
<comment type="function">
    <text evidence="1">Catalyzes the decarboxylation of 3-keto-L-gulonate-6-P into L-xylulose-5-P. Is involved in the anaerobic L-ascorbate utilization.</text>
</comment>
<comment type="catalytic activity">
    <reaction evidence="1">
        <text>3-dehydro-L-gulonate 6-phosphate + H(+) = L-xylulose 5-phosphate + CO2</text>
        <dbReference type="Rhea" id="RHEA:14353"/>
        <dbReference type="ChEBI" id="CHEBI:15378"/>
        <dbReference type="ChEBI" id="CHEBI:16526"/>
        <dbReference type="ChEBI" id="CHEBI:57829"/>
        <dbReference type="ChEBI" id="CHEBI:58774"/>
        <dbReference type="EC" id="4.1.1.85"/>
    </reaction>
</comment>
<comment type="cofactor">
    <cofactor evidence="1">
        <name>Mg(2+)</name>
        <dbReference type="ChEBI" id="CHEBI:18420"/>
    </cofactor>
    <text evidence="1">Binds 1 Mg(2+) ion per subunit.</text>
</comment>
<comment type="pathway">
    <text evidence="1">Cofactor degradation; L-ascorbate degradation; D-xylulose 5-phosphate from L-ascorbate: step 2/4.</text>
</comment>
<comment type="subunit">
    <text evidence="1">Homodimer.</text>
</comment>
<comment type="induction">
    <text evidence="1">Induced by L-ascorbate. Repressed by UlaR.</text>
</comment>
<comment type="similarity">
    <text evidence="1">Belongs to the HPS/KGPDC family. KGPDC subfamily.</text>
</comment>
<comment type="sequence caution" evidence="2">
    <conflict type="erroneous initiation">
        <sequence resource="EMBL-CDS" id="AAX68166"/>
    </conflict>
</comment>